<dbReference type="EMBL" id="AL123456">
    <property type="protein sequence ID" value="CCP43575.1"/>
    <property type="molecule type" value="Genomic_DNA"/>
</dbReference>
<dbReference type="PIR" id="C70811">
    <property type="entry name" value="C70811"/>
</dbReference>
<dbReference type="RefSeq" id="NP_215342.1">
    <property type="nucleotide sequence ID" value="NC_000962.3"/>
</dbReference>
<dbReference type="RefSeq" id="WP_003404335.1">
    <property type="nucleotide sequence ID" value="NZ_NVQJ01000066.1"/>
</dbReference>
<dbReference type="SMR" id="O53838"/>
<dbReference type="STRING" id="83332.Rv0827c"/>
<dbReference type="PaxDb" id="83332-Rv0827c"/>
<dbReference type="DNASU" id="885375"/>
<dbReference type="GeneID" id="885375"/>
<dbReference type="KEGG" id="mtu:Rv0827c"/>
<dbReference type="KEGG" id="mtv:RVBD_0827c"/>
<dbReference type="PATRIC" id="fig|83332.111.peg.914"/>
<dbReference type="TubercuList" id="Rv0827c"/>
<dbReference type="eggNOG" id="COG0640">
    <property type="taxonomic scope" value="Bacteria"/>
</dbReference>
<dbReference type="InParanoid" id="O53838"/>
<dbReference type="OrthoDB" id="9810923at2"/>
<dbReference type="PhylomeDB" id="O53838"/>
<dbReference type="Proteomes" id="UP000001584">
    <property type="component" value="Chromosome"/>
</dbReference>
<dbReference type="GO" id="GO:0003677">
    <property type="term" value="F:DNA binding"/>
    <property type="evidence" value="ECO:0000314"/>
    <property type="project" value="MTBBASE"/>
</dbReference>
<dbReference type="GO" id="GO:0003700">
    <property type="term" value="F:DNA-binding transcription factor activity"/>
    <property type="evidence" value="ECO:0007669"/>
    <property type="project" value="InterPro"/>
</dbReference>
<dbReference type="GO" id="GO:0032025">
    <property type="term" value="P:response to cobalt ion"/>
    <property type="evidence" value="ECO:0000314"/>
    <property type="project" value="MTBBASE"/>
</dbReference>
<dbReference type="GO" id="GO:0010045">
    <property type="term" value="P:response to nickel cation"/>
    <property type="evidence" value="ECO:0000314"/>
    <property type="project" value="MTBBASE"/>
</dbReference>
<dbReference type="CDD" id="cd00090">
    <property type="entry name" value="HTH_ARSR"/>
    <property type="match status" value="1"/>
</dbReference>
<dbReference type="Gene3D" id="1.10.10.10">
    <property type="entry name" value="Winged helix-like DNA-binding domain superfamily/Winged helix DNA-binding domain"/>
    <property type="match status" value="1"/>
</dbReference>
<dbReference type="InterPro" id="IPR011991">
    <property type="entry name" value="ArsR-like_HTH"/>
</dbReference>
<dbReference type="InterPro" id="IPR001845">
    <property type="entry name" value="HTH_ArsR_DNA-bd_dom"/>
</dbReference>
<dbReference type="InterPro" id="IPR051011">
    <property type="entry name" value="Metal_resp_trans_reg"/>
</dbReference>
<dbReference type="InterPro" id="IPR036388">
    <property type="entry name" value="WH-like_DNA-bd_sf"/>
</dbReference>
<dbReference type="InterPro" id="IPR036390">
    <property type="entry name" value="WH_DNA-bd_sf"/>
</dbReference>
<dbReference type="NCBIfam" id="NF033788">
    <property type="entry name" value="HTH_metalloreg"/>
    <property type="match status" value="1"/>
</dbReference>
<dbReference type="PANTHER" id="PTHR43132">
    <property type="entry name" value="ARSENICAL RESISTANCE OPERON REPRESSOR ARSR-RELATED"/>
    <property type="match status" value="1"/>
</dbReference>
<dbReference type="PANTHER" id="PTHR43132:SF8">
    <property type="entry name" value="HTH-TYPE TRANSCRIPTIONAL REGULATOR KMTR"/>
    <property type="match status" value="1"/>
</dbReference>
<dbReference type="Pfam" id="PF01022">
    <property type="entry name" value="HTH_5"/>
    <property type="match status" value="1"/>
</dbReference>
<dbReference type="PRINTS" id="PR00778">
    <property type="entry name" value="HTHARSR"/>
</dbReference>
<dbReference type="SMART" id="SM00418">
    <property type="entry name" value="HTH_ARSR"/>
    <property type="match status" value="1"/>
</dbReference>
<dbReference type="SUPFAM" id="SSF46785">
    <property type="entry name" value="Winged helix' DNA-binding domain"/>
    <property type="match status" value="1"/>
</dbReference>
<dbReference type="PROSITE" id="PS50987">
    <property type="entry name" value="HTH_ARSR_2"/>
    <property type="match status" value="1"/>
</dbReference>
<evidence type="ECO:0000255" key="1">
    <source>
        <dbReference type="PROSITE-ProRule" id="PRU00340"/>
    </source>
</evidence>
<evidence type="ECO:0000256" key="2">
    <source>
        <dbReference type="SAM" id="MobiDB-lite"/>
    </source>
</evidence>
<evidence type="ECO:0000269" key="3">
    <source>
    </source>
</evidence>
<evidence type="ECO:0000305" key="4">
    <source>
    </source>
</evidence>
<reference key="1">
    <citation type="journal article" date="1998" name="Nature">
        <title>Deciphering the biology of Mycobacterium tuberculosis from the complete genome sequence.</title>
        <authorList>
            <person name="Cole S.T."/>
            <person name="Brosch R."/>
            <person name="Parkhill J."/>
            <person name="Garnier T."/>
            <person name="Churcher C.M."/>
            <person name="Harris D.E."/>
            <person name="Gordon S.V."/>
            <person name="Eiglmeier K."/>
            <person name="Gas S."/>
            <person name="Barry C.E. III"/>
            <person name="Tekaia F."/>
            <person name="Badcock K."/>
            <person name="Basham D."/>
            <person name="Brown D."/>
            <person name="Chillingworth T."/>
            <person name="Connor R."/>
            <person name="Davies R.M."/>
            <person name="Devlin K."/>
            <person name="Feltwell T."/>
            <person name="Gentles S."/>
            <person name="Hamlin N."/>
            <person name="Holroyd S."/>
            <person name="Hornsby T."/>
            <person name="Jagels K."/>
            <person name="Krogh A."/>
            <person name="McLean J."/>
            <person name="Moule S."/>
            <person name="Murphy L.D."/>
            <person name="Oliver S."/>
            <person name="Osborne J."/>
            <person name="Quail M.A."/>
            <person name="Rajandream M.A."/>
            <person name="Rogers J."/>
            <person name="Rutter S."/>
            <person name="Seeger K."/>
            <person name="Skelton S."/>
            <person name="Squares S."/>
            <person name="Squares R."/>
            <person name="Sulston J.E."/>
            <person name="Taylor K."/>
            <person name="Whitehead S."/>
            <person name="Barrell B.G."/>
        </authorList>
    </citation>
    <scope>NUCLEOTIDE SEQUENCE [LARGE SCALE GENOMIC DNA]</scope>
    <source>
        <strain>ATCC 25618 / H37Rv</strain>
    </source>
</reference>
<reference key="2">
    <citation type="journal article" date="2007" name="J. Biol. Chem.">
        <title>Mycobacterial cells have dual nickel-cobalt sensors: sequence relationships and metal sites of metal-responsive repressors are not congruent.</title>
        <authorList>
            <person name="Campbell D.R."/>
            <person name="Chapman K.E."/>
            <person name="Waldron K.J."/>
            <person name="Tottey S."/>
            <person name="Kendall S."/>
            <person name="Cavallaro G."/>
            <person name="Andreini C."/>
            <person name="Hinds J."/>
            <person name="Stoker N.G."/>
            <person name="Robinson N.J."/>
            <person name="Cavet J.S."/>
        </authorList>
    </citation>
    <scope>FUNCTION</scope>
    <scope>DNA-BINDING</scope>
    <scope>ACTIVITY REGULATION</scope>
    <scope>INDUCTION</scope>
    <scope>GENE NAME</scope>
    <scope>MUTAGENESIS OF CYS-16; HIS-88; GLU-101; HIS-102; HIS-110 AND HIS-111</scope>
    <source>
        <strain>ATCC 25618 / H37Rv</strain>
    </source>
</reference>
<comment type="function">
    <text evidence="3">Represses expression of Rv2025c and its own expression. Acts by binding to the promoter regions.</text>
</comment>
<comment type="activity regulation">
    <text evidence="3">Binding to DNA is inhibited by nickel and cobalt ions.</text>
</comment>
<comment type="induction">
    <text evidence="3">Negatively autoregulated.</text>
</comment>
<comment type="miscellaneous">
    <text evidence="4">KmtR has tighter affinities for nickel and cobalt than NmtR.</text>
</comment>
<gene>
    <name type="primary">kmtR</name>
    <name type="ordered locus">Rv0827c</name>
</gene>
<accession>O53838</accession>
<accession>F2GNU2</accession>
<accession>L0T4V7</accession>
<sequence length="130" mass="14296">MYADSGPDPLPDDQVCLVVEVFRMLADATRVQVLWSLADREMSVNELAEQVGKPAPSVSQHLAKLRMARLVRTRRDGTTIFYRLENEHVRQLVIDAVFNAEHAGPGIPRHHRAAGGLQSVAKASATKDVG</sequence>
<protein>
    <recommendedName>
        <fullName>HTH-type transcriptional regulator KmtR</fullName>
    </recommendedName>
</protein>
<organism>
    <name type="scientific">Mycobacterium tuberculosis (strain ATCC 25618 / H37Rv)</name>
    <dbReference type="NCBI Taxonomy" id="83332"/>
    <lineage>
        <taxon>Bacteria</taxon>
        <taxon>Bacillati</taxon>
        <taxon>Actinomycetota</taxon>
        <taxon>Actinomycetes</taxon>
        <taxon>Mycobacteriales</taxon>
        <taxon>Mycobacteriaceae</taxon>
        <taxon>Mycobacterium</taxon>
        <taxon>Mycobacterium tuberculosis complex</taxon>
    </lineage>
</organism>
<feature type="chain" id="PRO_0000419178" description="HTH-type transcriptional regulator KmtR">
    <location>
        <begin position="1"/>
        <end position="130"/>
    </location>
</feature>
<feature type="domain" description="HTH arsR-type" evidence="1">
    <location>
        <begin position="10"/>
        <end position="104"/>
    </location>
</feature>
<feature type="DNA-binding region" description="H-T-H motif" evidence="1">
    <location>
        <begin position="44"/>
        <end position="67"/>
    </location>
</feature>
<feature type="region of interest" description="Disordered" evidence="2">
    <location>
        <begin position="110"/>
        <end position="130"/>
    </location>
</feature>
<feature type="mutagenesis site" description="No change in activity. Does not affect regulation by metal ions." evidence="3">
    <original>C</original>
    <variation>S</variation>
    <location>
        <position position="16"/>
    </location>
</feature>
<feature type="mutagenesis site" description="No change in activity. Lack of regulation by metal ions." evidence="3">
    <original>H</original>
    <variation>Q</variation>
    <location>
        <position position="88"/>
    </location>
</feature>
<feature type="mutagenesis site" description="No change in activity. Lack of regulation by metal ions." evidence="3">
    <original>E</original>
    <variation>Q</variation>
    <location>
        <position position="101"/>
    </location>
</feature>
<feature type="mutagenesis site" description="No change in activity. Lack of regulation by metal ions." evidence="3">
    <original>H</original>
    <variation>Q</variation>
    <location>
        <position position="102"/>
    </location>
</feature>
<feature type="mutagenesis site" description="No change in activity. Lack of regulation by metal ions." evidence="3">
    <original>H</original>
    <variation>Q</variation>
    <location>
        <position position="110"/>
    </location>
</feature>
<feature type="mutagenesis site" description="No change in activity. Lack of regulation by metal ions." evidence="3">
    <original>H</original>
    <variation>Q</variation>
    <location>
        <position position="111"/>
    </location>
</feature>
<keyword id="KW-0238">DNA-binding</keyword>
<keyword id="KW-1185">Reference proteome</keyword>
<keyword id="KW-0678">Repressor</keyword>
<keyword id="KW-0804">Transcription</keyword>
<keyword id="KW-0805">Transcription regulation</keyword>
<proteinExistence type="evidence at protein level"/>
<name>KMTR_MYCTU</name>